<accession>Q95Q11</accession>
<protein>
    <recommendedName>
        <fullName evidence="3">Small ribosomal subunit protein uS7m</fullName>
    </recommendedName>
    <alternativeName>
        <fullName>28S ribosomal protein S7, mitochondrial</fullName>
        <shortName>MRP-S7</shortName>
        <shortName>S7mt</shortName>
    </alternativeName>
</protein>
<dbReference type="EMBL" id="Z99281">
    <property type="protein sequence ID" value="CAC70123.2"/>
    <property type="molecule type" value="Genomic_DNA"/>
</dbReference>
<dbReference type="RefSeq" id="NP_502782.2">
    <property type="nucleotide sequence ID" value="NM_070381.3"/>
</dbReference>
<dbReference type="SMR" id="Q95Q11"/>
<dbReference type="BioGRID" id="54970">
    <property type="interactions" value="5"/>
</dbReference>
<dbReference type="FunCoup" id="Q95Q11">
    <property type="interactions" value="1691"/>
</dbReference>
<dbReference type="STRING" id="6239.Y57G11C.34.1"/>
<dbReference type="PaxDb" id="6239-Y57G11C.34"/>
<dbReference type="PeptideAtlas" id="Q95Q11"/>
<dbReference type="EnsemblMetazoa" id="Y57G11C.34.1">
    <property type="protein sequence ID" value="Y57G11C.34.1"/>
    <property type="gene ID" value="WBGene00013324"/>
</dbReference>
<dbReference type="GeneID" id="190379"/>
<dbReference type="KEGG" id="cel:CELE_Y57G11C.34"/>
<dbReference type="UCSC" id="Y57G11C.34">
    <property type="organism name" value="c. elegans"/>
</dbReference>
<dbReference type="AGR" id="WB:WBGene00013324"/>
<dbReference type="CTD" id="190379"/>
<dbReference type="WormBase" id="Y57G11C.34">
    <property type="protein sequence ID" value="CE39867"/>
    <property type="gene ID" value="WBGene00013324"/>
    <property type="gene designation" value="mrps-7"/>
</dbReference>
<dbReference type="eggNOG" id="KOG3291">
    <property type="taxonomic scope" value="Eukaryota"/>
</dbReference>
<dbReference type="GeneTree" id="ENSGT00390000014620"/>
<dbReference type="HOGENOM" id="CLU_072226_0_1_1"/>
<dbReference type="InParanoid" id="Q95Q11"/>
<dbReference type="OMA" id="HELHKQC"/>
<dbReference type="OrthoDB" id="9972728at2759"/>
<dbReference type="PhylomeDB" id="Q95Q11"/>
<dbReference type="Reactome" id="R-CEL-5389840">
    <property type="pathway name" value="Mitochondrial translation elongation"/>
</dbReference>
<dbReference type="Reactome" id="R-CEL-5419276">
    <property type="pathway name" value="Mitochondrial translation termination"/>
</dbReference>
<dbReference type="PRO" id="PR:Q95Q11"/>
<dbReference type="Proteomes" id="UP000001940">
    <property type="component" value="Chromosome IV"/>
</dbReference>
<dbReference type="Bgee" id="WBGene00013324">
    <property type="expression patterns" value="Expressed in pharyngeal muscle cell (C elegans) and 3 other cell types or tissues"/>
</dbReference>
<dbReference type="GO" id="GO:0005763">
    <property type="term" value="C:mitochondrial small ribosomal subunit"/>
    <property type="evidence" value="ECO:0000250"/>
    <property type="project" value="UniProtKB"/>
</dbReference>
<dbReference type="GO" id="GO:0005840">
    <property type="term" value="C:ribosome"/>
    <property type="evidence" value="ECO:0000318"/>
    <property type="project" value="GO_Central"/>
</dbReference>
<dbReference type="GO" id="GO:0003729">
    <property type="term" value="F:mRNA binding"/>
    <property type="evidence" value="ECO:0000318"/>
    <property type="project" value="GO_Central"/>
</dbReference>
<dbReference type="GO" id="GO:0019843">
    <property type="term" value="F:rRNA binding"/>
    <property type="evidence" value="ECO:0000318"/>
    <property type="project" value="GO_Central"/>
</dbReference>
<dbReference type="GO" id="GO:0003735">
    <property type="term" value="F:structural constituent of ribosome"/>
    <property type="evidence" value="ECO:0000250"/>
    <property type="project" value="UniProtKB"/>
</dbReference>
<dbReference type="GO" id="GO:0032543">
    <property type="term" value="P:mitochondrial translation"/>
    <property type="evidence" value="ECO:0000250"/>
    <property type="project" value="UniProtKB"/>
</dbReference>
<dbReference type="GO" id="GO:0000028">
    <property type="term" value="P:ribosomal small subunit assembly"/>
    <property type="evidence" value="ECO:0000318"/>
    <property type="project" value="GO_Central"/>
</dbReference>
<dbReference type="GO" id="GO:0006412">
    <property type="term" value="P:translation"/>
    <property type="evidence" value="ECO:0000318"/>
    <property type="project" value="GO_Central"/>
</dbReference>
<dbReference type="CDD" id="cd14870">
    <property type="entry name" value="uS7_Mitochondria_Mammalian"/>
    <property type="match status" value="1"/>
</dbReference>
<dbReference type="FunFam" id="1.10.455.10:FF:000009">
    <property type="entry name" value="Ribosomal protein S7"/>
    <property type="match status" value="1"/>
</dbReference>
<dbReference type="Gene3D" id="1.10.455.10">
    <property type="entry name" value="Ribosomal protein S7 domain"/>
    <property type="match status" value="1"/>
</dbReference>
<dbReference type="InterPro" id="IPR000235">
    <property type="entry name" value="Ribosomal_uS7"/>
</dbReference>
<dbReference type="InterPro" id="IPR023798">
    <property type="entry name" value="Ribosomal_uS7_dom"/>
</dbReference>
<dbReference type="InterPro" id="IPR036823">
    <property type="entry name" value="Ribosomal_uS7_dom_sf"/>
</dbReference>
<dbReference type="PANTHER" id="PTHR11205">
    <property type="entry name" value="RIBOSOMAL PROTEIN S7"/>
    <property type="match status" value="1"/>
</dbReference>
<dbReference type="Pfam" id="PF00177">
    <property type="entry name" value="Ribosomal_S7"/>
    <property type="match status" value="1"/>
</dbReference>
<dbReference type="SUPFAM" id="SSF47973">
    <property type="entry name" value="Ribosomal protein S7"/>
    <property type="match status" value="1"/>
</dbReference>
<proteinExistence type="inferred from homology"/>
<organism>
    <name type="scientific">Caenorhabditis elegans</name>
    <dbReference type="NCBI Taxonomy" id="6239"/>
    <lineage>
        <taxon>Eukaryota</taxon>
        <taxon>Metazoa</taxon>
        <taxon>Ecdysozoa</taxon>
        <taxon>Nematoda</taxon>
        <taxon>Chromadorea</taxon>
        <taxon>Rhabditida</taxon>
        <taxon>Rhabditina</taxon>
        <taxon>Rhabditomorpha</taxon>
        <taxon>Rhabditoidea</taxon>
        <taxon>Rhabditidae</taxon>
        <taxon>Peloderinae</taxon>
        <taxon>Caenorhabditis</taxon>
    </lineage>
</organism>
<feature type="transit peptide" description="Mitochondrion" evidence="2">
    <location>
        <begin position="1"/>
        <end position="14"/>
    </location>
</feature>
<feature type="chain" id="PRO_0000273063" description="Small ribosomal subunit protein uS7m">
    <location>
        <begin position="15"/>
        <end position="222"/>
    </location>
</feature>
<comment type="subunit">
    <text evidence="1">Component of the mitochondrial ribosome small subunit (28S) which comprises a 12S rRNA and about 30 distinct proteins.</text>
</comment>
<comment type="subcellular location">
    <subcellularLocation>
        <location evidence="1">Mitochondrion</location>
    </subcellularLocation>
</comment>
<comment type="similarity">
    <text evidence="3">Belongs to the universal ribosomal protein uS7 family.</text>
</comment>
<name>RT07_CAEEL</name>
<evidence type="ECO:0000250" key="1">
    <source>
        <dbReference type="UniProtKB" id="Q3T040"/>
    </source>
</evidence>
<evidence type="ECO:0000255" key="2"/>
<evidence type="ECO:0000305" key="3"/>
<keyword id="KW-0496">Mitochondrion</keyword>
<keyword id="KW-1185">Reference proteome</keyword>
<keyword id="KW-0687">Ribonucleoprotein</keyword>
<keyword id="KW-0689">Ribosomal protein</keyword>
<keyword id="KW-0809">Transit peptide</keyword>
<reference key="1">
    <citation type="journal article" date="1998" name="Science">
        <title>Genome sequence of the nematode C. elegans: a platform for investigating biology.</title>
        <authorList>
            <consortium name="The C. elegans sequencing consortium"/>
        </authorList>
    </citation>
    <scope>NUCLEOTIDE SEQUENCE [LARGE SCALE GENOMIC DNA]</scope>
    <source>
        <strain>Bristol N2</strain>
    </source>
</reference>
<sequence length="222" mass="25656">MTTKLARFAQKRWISSTTSTSNMYDPRVFRDPVTNVQELRKPLDSDDERNFLFLKAMKSDATPVFYRDHVIDKLIRVCTKDGEKETSRKNVLSALEIIKRRQYKAWAKASEEEKKSIELDPFLVAKKGIKNCHPLMKLQGVTRGGTTYQVPFPIEEPEAEFRAMKMMRDICRVRSKHGETHFKDILATELLAASQNEGSTIQAKQELHKTCEANRAYAHYRA</sequence>
<gene>
    <name type="primary">mrps-7</name>
    <name type="ORF">Y57G11C.34</name>
</gene>